<dbReference type="EMBL" id="GQ180868">
    <property type="protein sequence ID" value="ACU30730.1"/>
    <property type="molecule type" value="mRNA"/>
</dbReference>
<dbReference type="SMR" id="C7DQC0"/>
<dbReference type="GO" id="GO:0005576">
    <property type="term" value="C:extracellular region"/>
    <property type="evidence" value="ECO:0007669"/>
    <property type="project" value="UniProtKB-SubCell"/>
</dbReference>
<dbReference type="GO" id="GO:0090729">
    <property type="term" value="F:toxin activity"/>
    <property type="evidence" value="ECO:0007669"/>
    <property type="project" value="UniProtKB-KW"/>
</dbReference>
<dbReference type="InterPro" id="IPR013141">
    <property type="entry name" value="Conotoxin-I_CS"/>
</dbReference>
<dbReference type="InterPro" id="IPR020242">
    <property type="entry name" value="Conotoxin_I2"/>
</dbReference>
<dbReference type="Pfam" id="PF17557">
    <property type="entry name" value="Conotoxin_I2"/>
    <property type="match status" value="1"/>
</dbReference>
<dbReference type="PROSITE" id="PS60019">
    <property type="entry name" value="I_CONOTOXIN"/>
    <property type="match status" value="1"/>
</dbReference>
<accession>C7DQC0</accession>
<keyword id="KW-0027">Amidation</keyword>
<keyword id="KW-0165">Cleavage on pair of basic residues</keyword>
<keyword id="KW-1015">Disulfide bond</keyword>
<keyword id="KW-0964">Secreted</keyword>
<keyword id="KW-0732">Signal</keyword>
<keyword id="KW-0800">Toxin</keyword>
<protein>
    <recommendedName>
        <fullName evidence="3">Conotoxin Eb11.7</fullName>
    </recommendedName>
</protein>
<reference key="1">
    <citation type="journal article" date="2009" name="Peptides">
        <title>Identification of novel I-superfamily conopeptides from several clades of Conus species found in the South China Sea.</title>
        <authorList>
            <person name="Liu Z."/>
            <person name="Xu N."/>
            <person name="Hu J."/>
            <person name="Zhao C."/>
            <person name="Yu Z."/>
            <person name="Dai Q."/>
        </authorList>
    </citation>
    <scope>NUCLEOTIDE SEQUENCE [MRNA]</scope>
    <source>
        <tissue>Venom duct</tissue>
    </source>
</reference>
<name>I2B7_CONEB</name>
<sequence>MMFRLTSVSCFLLVIVCLNLFQVVLTRRCFPPGTFCSRYLPCCSGRCCSGWCTRRCFPRFGKRATFQE</sequence>
<feature type="signal peptide" evidence="1">
    <location>
        <begin position="1"/>
        <end position="26"/>
    </location>
</feature>
<feature type="peptide" id="PRO_0000392045" description="Conotoxin Eb11.7">
    <location>
        <begin position="27"/>
        <end position="60"/>
    </location>
</feature>
<feature type="propeptide" id="PRO_0000392046" evidence="1">
    <location>
        <begin position="64"/>
        <end position="68"/>
    </location>
</feature>
<feature type="modified residue" description="Phenylalanine amide" evidence="1">
    <location>
        <position position="60"/>
    </location>
</feature>
<feature type="disulfide bond" evidence="2">
    <location>
        <begin position="29"/>
        <end position="43"/>
    </location>
</feature>
<feature type="disulfide bond" evidence="2">
    <location>
        <begin position="36"/>
        <end position="48"/>
    </location>
</feature>
<feature type="disulfide bond" evidence="2">
    <location>
        <begin position="42"/>
        <end position="52"/>
    </location>
</feature>
<feature type="disulfide bond" evidence="2">
    <location>
        <begin position="47"/>
        <end position="56"/>
    </location>
</feature>
<organism>
    <name type="scientific">Conus eburneus</name>
    <name type="common">Ivory cone</name>
    <dbReference type="NCBI Taxonomy" id="101300"/>
    <lineage>
        <taxon>Eukaryota</taxon>
        <taxon>Metazoa</taxon>
        <taxon>Spiralia</taxon>
        <taxon>Lophotrochozoa</taxon>
        <taxon>Mollusca</taxon>
        <taxon>Gastropoda</taxon>
        <taxon>Caenogastropoda</taxon>
        <taxon>Neogastropoda</taxon>
        <taxon>Conoidea</taxon>
        <taxon>Conidae</taxon>
        <taxon>Conus</taxon>
        <taxon>Tesselliconus</taxon>
    </lineage>
</organism>
<proteinExistence type="inferred from homology"/>
<evidence type="ECO:0000250" key="1"/>
<evidence type="ECO:0000250" key="2">
    <source>
        <dbReference type="UniProtKB" id="Q7Z094"/>
    </source>
</evidence>
<evidence type="ECO:0000303" key="3">
    <source>
    </source>
</evidence>
<evidence type="ECO:0000305" key="4"/>
<evidence type="ECO:0000305" key="5">
    <source>
    </source>
</evidence>
<comment type="subcellular location">
    <subcellularLocation>
        <location evidence="5">Secreted</location>
    </subcellularLocation>
</comment>
<comment type="tissue specificity">
    <text evidence="5">Expressed by the venom duct.</text>
</comment>
<comment type="domain">
    <text evidence="4">The cysteine framework is XI (C-C-CC-CC-C-C).</text>
</comment>
<comment type="similarity">
    <text evidence="4">Belongs to the conotoxin I2 superfamily.</text>
</comment>